<dbReference type="EC" id="3.5.4.16" evidence="1"/>
<dbReference type="EMBL" id="CP000255">
    <property type="protein sequence ID" value="ABD21051.1"/>
    <property type="molecule type" value="Genomic_DNA"/>
</dbReference>
<dbReference type="RefSeq" id="WP_000134232.1">
    <property type="nucleotide sequence ID" value="NZ_CP027476.1"/>
</dbReference>
<dbReference type="SMR" id="Q2FJ74"/>
<dbReference type="KEGG" id="saa:SAUSA300_0551"/>
<dbReference type="HOGENOM" id="CLU_062816_1_1_9"/>
<dbReference type="OMA" id="PCSQGMS"/>
<dbReference type="UniPathway" id="UPA00848">
    <property type="reaction ID" value="UER00151"/>
</dbReference>
<dbReference type="Proteomes" id="UP000001939">
    <property type="component" value="Chromosome"/>
</dbReference>
<dbReference type="GO" id="GO:0003934">
    <property type="term" value="F:GTP cyclohydrolase I activity"/>
    <property type="evidence" value="ECO:0007669"/>
    <property type="project" value="UniProtKB-UniRule"/>
</dbReference>
<dbReference type="GO" id="GO:0046654">
    <property type="term" value="P:tetrahydrofolate biosynthetic process"/>
    <property type="evidence" value="ECO:0007669"/>
    <property type="project" value="UniProtKB-UniRule"/>
</dbReference>
<dbReference type="Gene3D" id="3.10.270.10">
    <property type="entry name" value="Urate Oxidase"/>
    <property type="match status" value="1"/>
</dbReference>
<dbReference type="HAMAP" id="MF_01527_B">
    <property type="entry name" value="GTP_cyclohydrol_B"/>
    <property type="match status" value="1"/>
</dbReference>
<dbReference type="InterPro" id="IPR022838">
    <property type="entry name" value="GTP_cyclohydrolase_FolE2"/>
</dbReference>
<dbReference type="InterPro" id="IPR003801">
    <property type="entry name" value="GTP_cyclohydrolase_FolE2/MptA"/>
</dbReference>
<dbReference type="NCBIfam" id="NF010200">
    <property type="entry name" value="PRK13674.1-1"/>
    <property type="match status" value="1"/>
</dbReference>
<dbReference type="PANTHER" id="PTHR36445">
    <property type="entry name" value="GTP CYCLOHYDROLASE MPTA"/>
    <property type="match status" value="1"/>
</dbReference>
<dbReference type="PANTHER" id="PTHR36445:SF1">
    <property type="entry name" value="GTP CYCLOHYDROLASE MPTA"/>
    <property type="match status" value="1"/>
</dbReference>
<dbReference type="Pfam" id="PF02649">
    <property type="entry name" value="GCHY-1"/>
    <property type="match status" value="1"/>
</dbReference>
<accession>Q2FJ74</accession>
<proteinExistence type="inferred from homology"/>
<gene>
    <name evidence="1" type="primary">folE2</name>
    <name type="ordered locus">SAUSA300_0551</name>
</gene>
<name>GCH4_STAA3</name>
<keyword id="KW-0378">Hydrolase</keyword>
<feature type="chain" id="PRO_0000289524" description="GTP cyclohydrolase FolE2">
    <location>
        <begin position="1"/>
        <end position="292"/>
    </location>
</feature>
<feature type="site" description="May be catalytically important" evidence="1">
    <location>
        <position position="176"/>
    </location>
</feature>
<organism>
    <name type="scientific">Staphylococcus aureus (strain USA300)</name>
    <dbReference type="NCBI Taxonomy" id="367830"/>
    <lineage>
        <taxon>Bacteria</taxon>
        <taxon>Bacillati</taxon>
        <taxon>Bacillota</taxon>
        <taxon>Bacilli</taxon>
        <taxon>Bacillales</taxon>
        <taxon>Staphylococcaceae</taxon>
        <taxon>Staphylococcus</taxon>
    </lineage>
</organism>
<comment type="function">
    <text evidence="1">Converts GTP to 7,8-dihydroneopterin triphosphate.</text>
</comment>
<comment type="catalytic activity">
    <reaction evidence="1">
        <text>GTP + H2O = 7,8-dihydroneopterin 3'-triphosphate + formate + H(+)</text>
        <dbReference type="Rhea" id="RHEA:17473"/>
        <dbReference type="ChEBI" id="CHEBI:15377"/>
        <dbReference type="ChEBI" id="CHEBI:15378"/>
        <dbReference type="ChEBI" id="CHEBI:15740"/>
        <dbReference type="ChEBI" id="CHEBI:37565"/>
        <dbReference type="ChEBI" id="CHEBI:58462"/>
        <dbReference type="EC" id="3.5.4.16"/>
    </reaction>
</comment>
<comment type="pathway">
    <text evidence="1">Cofactor biosynthesis; 7,8-dihydroneopterin triphosphate biosynthesis; 7,8-dihydroneopterin triphosphate from GTP: step 1/1.</text>
</comment>
<comment type="similarity">
    <text evidence="1">Belongs to the GTP cyclohydrolase IV family.</text>
</comment>
<evidence type="ECO:0000255" key="1">
    <source>
        <dbReference type="HAMAP-Rule" id="MF_01527"/>
    </source>
</evidence>
<sequence>MTEFDLSTREGRWKHFGSVDPIEGTKPTTKNEMTDLQSTHKDFLFEIEEVGIKNLVYPVLVDQYQTAGTFSFSTSLTKDEKGINMSRIIESVEKHYDNGIELEFNTLYQVLRTLQTNMKQNAAGVDVSGKWFFDRYSPTTNIKAVGNADVTYGLAIDGDKVTRKELTIEATVTTLCPCSKEISEYSAHNQRGVVTVKTYINKDQDIVDDYKNKILDAMEANASSILYPILKRPDEKRVTERAYENPRFVEDLIRLIAADLVEFDWLDGFDIECRNEESIHQHDAFAKLKYRK</sequence>
<reference key="1">
    <citation type="journal article" date="2006" name="Lancet">
        <title>Complete genome sequence of USA300, an epidemic clone of community-acquired meticillin-resistant Staphylococcus aureus.</title>
        <authorList>
            <person name="Diep B.A."/>
            <person name="Gill S.R."/>
            <person name="Chang R.F."/>
            <person name="Phan T.H."/>
            <person name="Chen J.H."/>
            <person name="Davidson M.G."/>
            <person name="Lin F."/>
            <person name="Lin J."/>
            <person name="Carleton H.A."/>
            <person name="Mongodin E.F."/>
            <person name="Sensabaugh G.F."/>
            <person name="Perdreau-Remington F."/>
        </authorList>
    </citation>
    <scope>NUCLEOTIDE SEQUENCE [LARGE SCALE GENOMIC DNA]</scope>
    <source>
        <strain>USA300</strain>
    </source>
</reference>
<protein>
    <recommendedName>
        <fullName evidence="1">GTP cyclohydrolase FolE2</fullName>
        <ecNumber evidence="1">3.5.4.16</ecNumber>
    </recommendedName>
</protein>